<feature type="chain" id="PRO_0000272677" description="UPF0337 protein SA0772">
    <location>
        <begin position="1"/>
        <end position="64"/>
    </location>
</feature>
<feature type="region of interest" description="Disordered" evidence="1">
    <location>
        <begin position="1"/>
        <end position="40"/>
    </location>
</feature>
<feature type="compositionally biased region" description="Basic and acidic residues" evidence="1">
    <location>
        <begin position="25"/>
        <end position="40"/>
    </location>
</feature>
<accession>Q7A6L9</accession>
<evidence type="ECO:0000256" key="1">
    <source>
        <dbReference type="SAM" id="MobiDB-lite"/>
    </source>
</evidence>
<evidence type="ECO:0000305" key="2"/>
<dbReference type="EMBL" id="BA000018">
    <property type="protein sequence ID" value="BAB42011.1"/>
    <property type="molecule type" value="Genomic_DNA"/>
</dbReference>
<dbReference type="PIR" id="H89856">
    <property type="entry name" value="H89856"/>
</dbReference>
<dbReference type="RefSeq" id="WP_000752917.1">
    <property type="nucleotide sequence ID" value="NC_002745.2"/>
</dbReference>
<dbReference type="SMR" id="Q7A6L9"/>
<dbReference type="EnsemblBacteria" id="BAB42011">
    <property type="protein sequence ID" value="BAB42011"/>
    <property type="gene ID" value="BAB42011"/>
</dbReference>
<dbReference type="KEGG" id="sau:SA0772"/>
<dbReference type="HOGENOM" id="CLU_135567_0_3_9"/>
<dbReference type="Gene3D" id="1.10.1470.10">
    <property type="entry name" value="YjbJ"/>
    <property type="match status" value="1"/>
</dbReference>
<dbReference type="InterPro" id="IPR008462">
    <property type="entry name" value="CsbD"/>
</dbReference>
<dbReference type="InterPro" id="IPR050423">
    <property type="entry name" value="UPF0337_stress_rsp"/>
</dbReference>
<dbReference type="InterPro" id="IPR036629">
    <property type="entry name" value="YjbJ_sf"/>
</dbReference>
<dbReference type="PANTHER" id="PTHR34977">
    <property type="entry name" value="UPF0337 PROTEIN YJBJ"/>
    <property type="match status" value="1"/>
</dbReference>
<dbReference type="PANTHER" id="PTHR34977:SF1">
    <property type="entry name" value="UPF0337 PROTEIN YJBJ"/>
    <property type="match status" value="1"/>
</dbReference>
<dbReference type="Pfam" id="PF05532">
    <property type="entry name" value="CsbD"/>
    <property type="match status" value="1"/>
</dbReference>
<dbReference type="SUPFAM" id="SSF69047">
    <property type="entry name" value="Hypothetical protein YjbJ"/>
    <property type="match status" value="1"/>
</dbReference>
<gene>
    <name type="ordered locus">SA0772</name>
</gene>
<sequence length="64" mass="7019">MADESKFEQAKGNVKETVGNVTDNKNLENEGKEDKASGKAKEFVENAKEKATDFIDKVKGNKGE</sequence>
<name>Y772_STAAN</name>
<proteinExistence type="evidence at protein level"/>
<organism>
    <name type="scientific">Staphylococcus aureus (strain N315)</name>
    <dbReference type="NCBI Taxonomy" id="158879"/>
    <lineage>
        <taxon>Bacteria</taxon>
        <taxon>Bacillati</taxon>
        <taxon>Bacillota</taxon>
        <taxon>Bacilli</taxon>
        <taxon>Bacillales</taxon>
        <taxon>Staphylococcaceae</taxon>
        <taxon>Staphylococcus</taxon>
    </lineage>
</organism>
<protein>
    <recommendedName>
        <fullName>UPF0337 protein SA0772</fullName>
    </recommendedName>
</protein>
<reference key="1">
    <citation type="journal article" date="2001" name="Lancet">
        <title>Whole genome sequencing of meticillin-resistant Staphylococcus aureus.</title>
        <authorList>
            <person name="Kuroda M."/>
            <person name="Ohta T."/>
            <person name="Uchiyama I."/>
            <person name="Baba T."/>
            <person name="Yuzawa H."/>
            <person name="Kobayashi I."/>
            <person name="Cui L."/>
            <person name="Oguchi A."/>
            <person name="Aoki K."/>
            <person name="Nagai Y."/>
            <person name="Lian J.-Q."/>
            <person name="Ito T."/>
            <person name="Kanamori M."/>
            <person name="Matsumaru H."/>
            <person name="Maruyama A."/>
            <person name="Murakami H."/>
            <person name="Hosoyama A."/>
            <person name="Mizutani-Ui Y."/>
            <person name="Takahashi N.K."/>
            <person name="Sawano T."/>
            <person name="Inoue R."/>
            <person name="Kaito C."/>
            <person name="Sekimizu K."/>
            <person name="Hirakawa H."/>
            <person name="Kuhara S."/>
            <person name="Goto S."/>
            <person name="Yabuzaki J."/>
            <person name="Kanehisa M."/>
            <person name="Yamashita A."/>
            <person name="Oshima K."/>
            <person name="Furuya K."/>
            <person name="Yoshino C."/>
            <person name="Shiba T."/>
            <person name="Hattori M."/>
            <person name="Ogasawara N."/>
            <person name="Hayashi H."/>
            <person name="Hiramatsu K."/>
        </authorList>
    </citation>
    <scope>NUCLEOTIDE SEQUENCE [LARGE SCALE GENOMIC DNA]</scope>
    <source>
        <strain>N315</strain>
    </source>
</reference>
<reference key="2">
    <citation type="submission" date="2007-10" db="UniProtKB">
        <title>Shotgun proteomic analysis of total and membrane protein extracts of S. aureus strain N315.</title>
        <authorList>
            <person name="Vaezzadeh A.R."/>
            <person name="Deshusses J."/>
            <person name="Lescuyer P."/>
            <person name="Hochstrasser D.F."/>
        </authorList>
    </citation>
    <scope>IDENTIFICATION BY MASS SPECTROMETRY [LARGE SCALE ANALYSIS]</scope>
    <source>
        <strain>N315</strain>
    </source>
</reference>
<comment type="similarity">
    <text evidence="2">Belongs to the UPF0337 (CsbD) family.</text>
</comment>